<comment type="function">
    <text evidence="1">Catalyzes the condensation of pantoate with beta-alanine in an ATP-dependent reaction via a pantoyl-adenylate intermediate.</text>
</comment>
<comment type="catalytic activity">
    <reaction evidence="1">
        <text>(R)-pantoate + beta-alanine + ATP = (R)-pantothenate + AMP + diphosphate + H(+)</text>
        <dbReference type="Rhea" id="RHEA:10912"/>
        <dbReference type="ChEBI" id="CHEBI:15378"/>
        <dbReference type="ChEBI" id="CHEBI:15980"/>
        <dbReference type="ChEBI" id="CHEBI:29032"/>
        <dbReference type="ChEBI" id="CHEBI:30616"/>
        <dbReference type="ChEBI" id="CHEBI:33019"/>
        <dbReference type="ChEBI" id="CHEBI:57966"/>
        <dbReference type="ChEBI" id="CHEBI:456215"/>
        <dbReference type="EC" id="6.3.2.1"/>
    </reaction>
</comment>
<comment type="pathway">
    <text evidence="1">Cofactor biosynthesis; (R)-pantothenate biosynthesis; (R)-pantothenate from (R)-pantoate and beta-alanine: step 1/1.</text>
</comment>
<comment type="subunit">
    <text evidence="1">Homodimer.</text>
</comment>
<comment type="subcellular location">
    <subcellularLocation>
        <location evidence="1">Cytoplasm</location>
    </subcellularLocation>
</comment>
<comment type="miscellaneous">
    <text evidence="1">The reaction proceeds by a bi uni uni bi ping pong mechanism.</text>
</comment>
<comment type="similarity">
    <text evidence="1">Belongs to the pantothenate synthetase family.</text>
</comment>
<keyword id="KW-0067">ATP-binding</keyword>
<keyword id="KW-0963">Cytoplasm</keyword>
<keyword id="KW-0436">Ligase</keyword>
<keyword id="KW-0547">Nucleotide-binding</keyword>
<keyword id="KW-0566">Pantothenate biosynthesis</keyword>
<name>PANC_ECOSM</name>
<evidence type="ECO:0000255" key="1">
    <source>
        <dbReference type="HAMAP-Rule" id="MF_00158"/>
    </source>
</evidence>
<protein>
    <recommendedName>
        <fullName evidence="1">Pantothenate synthetase</fullName>
        <shortName evidence="1">PS</shortName>
        <ecNumber evidence="1">6.3.2.1</ecNumber>
    </recommendedName>
    <alternativeName>
        <fullName evidence="1">Pantoate--beta-alanine ligase</fullName>
    </alternativeName>
    <alternativeName>
        <fullName evidence="1">Pantoate-activating enzyme</fullName>
    </alternativeName>
</protein>
<sequence>MLIIETLPLLRQQIRRLRMEGKRVALVPTMGNLHDGHMKLVDEAKARADVVVVSIFVNPMQFDRPEDLARYPRTLQEDCEKLNKRKVDLVFAPSVKEIYPNGTETHTYVDVPGLSTMLEGASRPGHFRGVSTIVSKLFNLVQPDIACFGEKDFQQLALIRKMVADMGFDIEIVGVPIMRAKDGLALSSRNGYLTAEQRKIAPGLYKVLSSIADKLQAGERDLDEIIAIAGQELNEKGFRSDDIQIRDADTLLEISENSKRAVILVAAWLGDARLIDNKIVELA</sequence>
<proteinExistence type="inferred from homology"/>
<organism>
    <name type="scientific">Escherichia coli (strain SMS-3-5 / SECEC)</name>
    <dbReference type="NCBI Taxonomy" id="439855"/>
    <lineage>
        <taxon>Bacteria</taxon>
        <taxon>Pseudomonadati</taxon>
        <taxon>Pseudomonadota</taxon>
        <taxon>Gammaproteobacteria</taxon>
        <taxon>Enterobacterales</taxon>
        <taxon>Enterobacteriaceae</taxon>
        <taxon>Escherichia</taxon>
    </lineage>
</organism>
<dbReference type="EC" id="6.3.2.1" evidence="1"/>
<dbReference type="EMBL" id="CP000970">
    <property type="protein sequence ID" value="ACB15674.1"/>
    <property type="molecule type" value="Genomic_DNA"/>
</dbReference>
<dbReference type="RefSeq" id="WP_000905377.1">
    <property type="nucleotide sequence ID" value="NC_010498.1"/>
</dbReference>
<dbReference type="BMRB" id="B1LGT5"/>
<dbReference type="SMR" id="B1LGT5"/>
<dbReference type="KEGG" id="ecm:EcSMS35_0144"/>
<dbReference type="HOGENOM" id="CLU_047148_0_0_6"/>
<dbReference type="UniPathway" id="UPA00028">
    <property type="reaction ID" value="UER00005"/>
</dbReference>
<dbReference type="Proteomes" id="UP000007011">
    <property type="component" value="Chromosome"/>
</dbReference>
<dbReference type="GO" id="GO:0005829">
    <property type="term" value="C:cytosol"/>
    <property type="evidence" value="ECO:0007669"/>
    <property type="project" value="TreeGrafter"/>
</dbReference>
<dbReference type="GO" id="GO:0005524">
    <property type="term" value="F:ATP binding"/>
    <property type="evidence" value="ECO:0007669"/>
    <property type="project" value="UniProtKB-KW"/>
</dbReference>
<dbReference type="GO" id="GO:0004592">
    <property type="term" value="F:pantoate-beta-alanine ligase activity"/>
    <property type="evidence" value="ECO:0007669"/>
    <property type="project" value="UniProtKB-UniRule"/>
</dbReference>
<dbReference type="GO" id="GO:0015940">
    <property type="term" value="P:pantothenate biosynthetic process"/>
    <property type="evidence" value="ECO:0007669"/>
    <property type="project" value="UniProtKB-UniRule"/>
</dbReference>
<dbReference type="CDD" id="cd00560">
    <property type="entry name" value="PanC"/>
    <property type="match status" value="1"/>
</dbReference>
<dbReference type="FunFam" id="3.30.1300.10:FF:000001">
    <property type="entry name" value="Pantothenate synthetase"/>
    <property type="match status" value="1"/>
</dbReference>
<dbReference type="FunFam" id="3.40.50.620:FF:000013">
    <property type="entry name" value="Pantothenate synthetase"/>
    <property type="match status" value="1"/>
</dbReference>
<dbReference type="Gene3D" id="3.40.50.620">
    <property type="entry name" value="HUPs"/>
    <property type="match status" value="1"/>
</dbReference>
<dbReference type="Gene3D" id="3.30.1300.10">
    <property type="entry name" value="Pantoate-beta-alanine ligase, C-terminal domain"/>
    <property type="match status" value="1"/>
</dbReference>
<dbReference type="HAMAP" id="MF_00158">
    <property type="entry name" value="PanC"/>
    <property type="match status" value="1"/>
</dbReference>
<dbReference type="InterPro" id="IPR004821">
    <property type="entry name" value="Cyt_trans-like"/>
</dbReference>
<dbReference type="InterPro" id="IPR003721">
    <property type="entry name" value="Pantoate_ligase"/>
</dbReference>
<dbReference type="InterPro" id="IPR042176">
    <property type="entry name" value="Pantoate_ligase_C"/>
</dbReference>
<dbReference type="InterPro" id="IPR014729">
    <property type="entry name" value="Rossmann-like_a/b/a_fold"/>
</dbReference>
<dbReference type="NCBIfam" id="TIGR00125">
    <property type="entry name" value="cyt_tran_rel"/>
    <property type="match status" value="1"/>
</dbReference>
<dbReference type="NCBIfam" id="TIGR00018">
    <property type="entry name" value="panC"/>
    <property type="match status" value="1"/>
</dbReference>
<dbReference type="PANTHER" id="PTHR21299">
    <property type="entry name" value="CYTIDYLATE KINASE/PANTOATE-BETA-ALANINE LIGASE"/>
    <property type="match status" value="1"/>
</dbReference>
<dbReference type="PANTHER" id="PTHR21299:SF1">
    <property type="entry name" value="PANTOATE--BETA-ALANINE LIGASE"/>
    <property type="match status" value="1"/>
</dbReference>
<dbReference type="Pfam" id="PF02569">
    <property type="entry name" value="Pantoate_ligase"/>
    <property type="match status" value="1"/>
</dbReference>
<dbReference type="SUPFAM" id="SSF52374">
    <property type="entry name" value="Nucleotidylyl transferase"/>
    <property type="match status" value="1"/>
</dbReference>
<reference key="1">
    <citation type="journal article" date="2008" name="J. Bacteriol.">
        <title>Insights into the environmental resistance gene pool from the genome sequence of the multidrug-resistant environmental isolate Escherichia coli SMS-3-5.</title>
        <authorList>
            <person name="Fricke W.F."/>
            <person name="Wright M.S."/>
            <person name="Lindell A.H."/>
            <person name="Harkins D.M."/>
            <person name="Baker-Austin C."/>
            <person name="Ravel J."/>
            <person name="Stepanauskas R."/>
        </authorList>
    </citation>
    <scope>NUCLEOTIDE SEQUENCE [LARGE SCALE GENOMIC DNA]</scope>
    <source>
        <strain>SMS-3-5 / SECEC</strain>
    </source>
</reference>
<gene>
    <name evidence="1" type="primary">panC</name>
    <name type="ordered locus">EcSMS35_0144</name>
</gene>
<feature type="chain" id="PRO_1000118150" description="Pantothenate synthetase">
    <location>
        <begin position="1"/>
        <end position="283"/>
    </location>
</feature>
<feature type="active site" description="Proton donor" evidence="1">
    <location>
        <position position="37"/>
    </location>
</feature>
<feature type="binding site" evidence="1">
    <location>
        <begin position="30"/>
        <end position="37"/>
    </location>
    <ligand>
        <name>ATP</name>
        <dbReference type="ChEBI" id="CHEBI:30616"/>
    </ligand>
</feature>
<feature type="binding site" evidence="1">
    <location>
        <position position="61"/>
    </location>
    <ligand>
        <name>(R)-pantoate</name>
        <dbReference type="ChEBI" id="CHEBI:15980"/>
    </ligand>
</feature>
<feature type="binding site" evidence="1">
    <location>
        <position position="61"/>
    </location>
    <ligand>
        <name>beta-alanine</name>
        <dbReference type="ChEBI" id="CHEBI:57966"/>
    </ligand>
</feature>
<feature type="binding site" evidence="1">
    <location>
        <begin position="149"/>
        <end position="152"/>
    </location>
    <ligand>
        <name>ATP</name>
        <dbReference type="ChEBI" id="CHEBI:30616"/>
    </ligand>
</feature>
<feature type="binding site" evidence="1">
    <location>
        <position position="155"/>
    </location>
    <ligand>
        <name>(R)-pantoate</name>
        <dbReference type="ChEBI" id="CHEBI:15980"/>
    </ligand>
</feature>
<feature type="binding site" evidence="1">
    <location>
        <begin position="186"/>
        <end position="189"/>
    </location>
    <ligand>
        <name>ATP</name>
        <dbReference type="ChEBI" id="CHEBI:30616"/>
    </ligand>
</feature>
<accession>B1LGT5</accession>